<reference evidence="6 7" key="1">
    <citation type="journal article" date="2000" name="J. Exp. Zool.">
        <title>cDNA cloning of rat prolyl oligopeptidase and its expression in the ovary during the estrous cycle.</title>
        <authorList>
            <person name="Kimura A."/>
            <person name="Takahashi T."/>
        </authorList>
    </citation>
    <scope>NUCLEOTIDE SEQUENCE [MRNA]</scope>
    <scope>FUNCTION</scope>
    <scope>CATALYTIC ACTIVITY</scope>
    <scope>ACTIVITY REGULATION</scope>
    <scope>TISSUE SPECIFICITY</scope>
    <scope>DEVELOPMENTAL STAGE</scope>
    <source>
        <strain evidence="5">Wistar</strain>
        <tissue evidence="5">Liver</tissue>
    </source>
</reference>
<reference evidence="6" key="2">
    <citation type="submission" date="2009-01" db="UniProtKB">
        <authorList>
            <person name="Maurya D.K."/>
            <person name="Bhargava P."/>
        </authorList>
    </citation>
    <scope>IDENTIFICATION BY MASS SPECTROMETRY</scope>
</reference>
<sequence>MLSFQYPDVYRDETSVQDYHGHKICDPYAWLEDPDSEQTKAFVEAQNKITVPFLEQCPIRGLYKERMTELYDYPKYSCHFKKGKRYFYFYNTGLQNQRVLYVQDSLEGEARVFLDPNTLSDDGTVALRGYAFSEDGEYFAYGLSASGSDWVTIKFMKVDGAKELPDVLERVKFTCMAWTHDGKGMFYNSYPQQDGKSDGTETSTNLHQKLCYHVLGTDQSEDVLCAEFPDEPKWMGGAELSDDGRYVLLSIWEGCDPVNRLWYCDLQQGSNGINGILKWVKLIDNFEGEYDYITNEGTVFTFKTNRNSPNYRLINIDFTDPDESKWKVLVPEHEKDVLEWVACVRSNFLVLCYLRNVKNILQLHDLTTGALLKTFPLDVGSVVGYSGRKKDSEIFYQFTSFLSPGVIYHCDLTREELEPRVFREVTVKGIDASDYQTIQVFYPSKDGTKIPMFIVHKKGIKLDGSHPAFLYGYGGFNISITPNYSVSRLIFVRHMGGVLAVANIRGGGEYGETWHKGGILANKQNCFDDFQCAAEYLIKEGYTTSKRLTINGGSNGGLLVAACANQRPDLFGCVIAQVGVMDMLKFHKFTIGHAWTTDYGCSDSKQHFEWLLKYSPLHNVKLPEADDIQYPSMLLLTADHDDRVVPLHSLKFIATLQYIVGRSRKQSNPLLIHVDTKAGHGPGKPTAKVIEEVSDMFAFIARCLNIEWIQ</sequence>
<accession>O70196</accession>
<evidence type="ECO:0000250" key="1">
    <source>
        <dbReference type="UniProtKB" id="P23687"/>
    </source>
</evidence>
<evidence type="ECO:0000250" key="2">
    <source>
        <dbReference type="UniProtKB" id="P48147"/>
    </source>
</evidence>
<evidence type="ECO:0000255" key="3"/>
<evidence type="ECO:0000255" key="4">
    <source>
        <dbReference type="PROSITE-ProRule" id="PRU10084"/>
    </source>
</evidence>
<evidence type="ECO:0000269" key="5">
    <source>
    </source>
</evidence>
<evidence type="ECO:0000305" key="6"/>
<evidence type="ECO:0000312" key="7">
    <source>
        <dbReference type="EMBL" id="BAA25544.1"/>
    </source>
</evidence>
<evidence type="ECO:0000312" key="8">
    <source>
        <dbReference type="RGD" id="620841"/>
    </source>
</evidence>
<feature type="chain" id="PRO_0000365637" description="Prolyl endopeptidase">
    <location>
        <begin position="1"/>
        <end position="710"/>
    </location>
</feature>
<feature type="active site" description="Charge relay system" evidence="1 4">
    <location>
        <position position="554"/>
    </location>
</feature>
<feature type="active site" description="Charge relay system" evidence="1 4">
    <location>
        <position position="641"/>
    </location>
</feature>
<feature type="active site" description="Charge relay system" evidence="1 4">
    <location>
        <position position="680"/>
    </location>
</feature>
<feature type="modified residue" description="N-acetylmethionine" evidence="2">
    <location>
        <position position="1"/>
    </location>
</feature>
<feature type="modified residue" description="N6-acetyllysine" evidence="2">
    <location>
        <position position="157"/>
    </location>
</feature>
<organism>
    <name type="scientific">Rattus norvegicus</name>
    <name type="common">Rat</name>
    <dbReference type="NCBI Taxonomy" id="10116"/>
    <lineage>
        <taxon>Eukaryota</taxon>
        <taxon>Metazoa</taxon>
        <taxon>Chordata</taxon>
        <taxon>Craniata</taxon>
        <taxon>Vertebrata</taxon>
        <taxon>Euteleostomi</taxon>
        <taxon>Mammalia</taxon>
        <taxon>Eutheria</taxon>
        <taxon>Euarchontoglires</taxon>
        <taxon>Glires</taxon>
        <taxon>Rodentia</taxon>
        <taxon>Myomorpha</taxon>
        <taxon>Muroidea</taxon>
        <taxon>Muridae</taxon>
        <taxon>Murinae</taxon>
        <taxon>Rattus</taxon>
    </lineage>
</organism>
<name>PPCE_RAT</name>
<keyword id="KW-0007">Acetylation</keyword>
<keyword id="KW-0963">Cytoplasm</keyword>
<keyword id="KW-0378">Hydrolase</keyword>
<keyword id="KW-0645">Protease</keyword>
<keyword id="KW-1185">Reference proteome</keyword>
<keyword id="KW-0720">Serine protease</keyword>
<protein>
    <recommendedName>
        <fullName evidence="1">Prolyl endopeptidase</fullName>
        <shortName evidence="1">PE</shortName>
        <ecNumber>3.4.21.26</ecNumber>
    </recommendedName>
    <alternativeName>
        <fullName evidence="1">Post-proline cleaving enzyme</fullName>
    </alternativeName>
    <alternativeName>
        <fullName>rPop</fullName>
    </alternativeName>
</protein>
<dbReference type="EC" id="3.4.21.26"/>
<dbReference type="EMBL" id="AB012759">
    <property type="protein sequence ID" value="BAA25544.1"/>
    <property type="molecule type" value="mRNA"/>
</dbReference>
<dbReference type="RefSeq" id="NP_112614.1">
    <property type="nucleotide sequence ID" value="NM_031324.1"/>
</dbReference>
<dbReference type="SMR" id="O70196"/>
<dbReference type="FunCoup" id="O70196">
    <property type="interactions" value="2161"/>
</dbReference>
<dbReference type="STRING" id="10116.ENSRNOP00000071906"/>
<dbReference type="BindingDB" id="O70196"/>
<dbReference type="ChEMBL" id="CHEMBL4035"/>
<dbReference type="ESTHER" id="ratno-RPOP">
    <property type="family name" value="S9N_PPCE_Peptidase_S9"/>
</dbReference>
<dbReference type="MEROPS" id="S09.001"/>
<dbReference type="iPTMnet" id="O70196"/>
<dbReference type="PhosphoSitePlus" id="O70196"/>
<dbReference type="jPOST" id="O70196"/>
<dbReference type="GeneID" id="83471"/>
<dbReference type="KEGG" id="rno:83471"/>
<dbReference type="UCSC" id="RGD:620841">
    <property type="organism name" value="rat"/>
</dbReference>
<dbReference type="AGR" id="RGD:620841"/>
<dbReference type="CTD" id="5550"/>
<dbReference type="RGD" id="620841">
    <property type="gene designation" value="Prep"/>
</dbReference>
<dbReference type="InParanoid" id="O70196"/>
<dbReference type="PhylomeDB" id="O70196"/>
<dbReference type="BRENDA" id="3.4.21.26">
    <property type="organism ID" value="5301"/>
</dbReference>
<dbReference type="PRO" id="PR:O70196"/>
<dbReference type="Proteomes" id="UP000002494">
    <property type="component" value="Unplaced"/>
</dbReference>
<dbReference type="GO" id="GO:0005737">
    <property type="term" value="C:cytoplasm"/>
    <property type="evidence" value="ECO:0000250"/>
    <property type="project" value="UniProtKB"/>
</dbReference>
<dbReference type="GO" id="GO:0005829">
    <property type="term" value="C:cytosol"/>
    <property type="evidence" value="ECO:0000318"/>
    <property type="project" value="GO_Central"/>
</dbReference>
<dbReference type="GO" id="GO:0005576">
    <property type="term" value="C:extracellular region"/>
    <property type="evidence" value="ECO:0000266"/>
    <property type="project" value="RGD"/>
</dbReference>
<dbReference type="GO" id="GO:0005634">
    <property type="term" value="C:nucleus"/>
    <property type="evidence" value="ECO:0000266"/>
    <property type="project" value="RGD"/>
</dbReference>
<dbReference type="GO" id="GO:0004175">
    <property type="term" value="F:endopeptidase activity"/>
    <property type="evidence" value="ECO:0000314"/>
    <property type="project" value="RGD"/>
</dbReference>
<dbReference type="GO" id="GO:0004181">
    <property type="term" value="F:metallocarboxypeptidase activity"/>
    <property type="evidence" value="ECO:0000266"/>
    <property type="project" value="RGD"/>
</dbReference>
<dbReference type="GO" id="GO:0070012">
    <property type="term" value="F:oligopeptidase activity"/>
    <property type="evidence" value="ECO:0000318"/>
    <property type="project" value="GO_Central"/>
</dbReference>
<dbReference type="GO" id="GO:0042277">
    <property type="term" value="F:peptide binding"/>
    <property type="evidence" value="ECO:0000314"/>
    <property type="project" value="RGD"/>
</dbReference>
<dbReference type="GO" id="GO:0004252">
    <property type="term" value="F:serine-type endopeptidase activity"/>
    <property type="evidence" value="ECO:0007669"/>
    <property type="project" value="UniProtKB-EC"/>
</dbReference>
<dbReference type="GO" id="GO:0002003">
    <property type="term" value="P:angiotensin maturation"/>
    <property type="evidence" value="ECO:0000266"/>
    <property type="project" value="RGD"/>
</dbReference>
<dbReference type="GO" id="GO:0030163">
    <property type="term" value="P:protein catabolic process"/>
    <property type="evidence" value="ECO:0000314"/>
    <property type="project" value="RGD"/>
</dbReference>
<dbReference type="FunFam" id="2.130.10.120:FF:000001">
    <property type="entry name" value="Prolyl endopeptidase"/>
    <property type="match status" value="1"/>
</dbReference>
<dbReference type="FunFam" id="3.40.50.1820:FF:000005">
    <property type="entry name" value="Prolyl endopeptidase"/>
    <property type="match status" value="1"/>
</dbReference>
<dbReference type="FunFam" id="3.40.50.1820:FF:000275">
    <property type="entry name" value="Prolyl endopeptidase"/>
    <property type="match status" value="1"/>
</dbReference>
<dbReference type="Gene3D" id="3.40.50.1820">
    <property type="entry name" value="alpha/beta hydrolase"/>
    <property type="match status" value="1"/>
</dbReference>
<dbReference type="Gene3D" id="2.130.10.120">
    <property type="entry name" value="Prolyl oligopeptidase, N-terminal domain"/>
    <property type="match status" value="1"/>
</dbReference>
<dbReference type="InterPro" id="IPR029058">
    <property type="entry name" value="AB_hydrolase_fold"/>
</dbReference>
<dbReference type="InterPro" id="IPR002471">
    <property type="entry name" value="Pept_S9_AS"/>
</dbReference>
<dbReference type="InterPro" id="IPR023302">
    <property type="entry name" value="Pept_S9A_N"/>
</dbReference>
<dbReference type="InterPro" id="IPR001375">
    <property type="entry name" value="Peptidase_S9_cat"/>
</dbReference>
<dbReference type="InterPro" id="IPR002470">
    <property type="entry name" value="Peptidase_S9A"/>
</dbReference>
<dbReference type="InterPro" id="IPR051167">
    <property type="entry name" value="Prolyl_oligopep/macrocyclase"/>
</dbReference>
<dbReference type="PANTHER" id="PTHR42881">
    <property type="entry name" value="PROLYL ENDOPEPTIDASE"/>
    <property type="match status" value="1"/>
</dbReference>
<dbReference type="PANTHER" id="PTHR42881:SF2">
    <property type="entry name" value="PROLYL ENDOPEPTIDASE"/>
    <property type="match status" value="1"/>
</dbReference>
<dbReference type="Pfam" id="PF00326">
    <property type="entry name" value="Peptidase_S9"/>
    <property type="match status" value="1"/>
</dbReference>
<dbReference type="Pfam" id="PF02897">
    <property type="entry name" value="Peptidase_S9_N"/>
    <property type="match status" value="1"/>
</dbReference>
<dbReference type="PRINTS" id="PR00862">
    <property type="entry name" value="PROLIGOPTASE"/>
</dbReference>
<dbReference type="SUPFAM" id="SSF53474">
    <property type="entry name" value="alpha/beta-Hydrolases"/>
    <property type="match status" value="1"/>
</dbReference>
<dbReference type="SUPFAM" id="SSF50993">
    <property type="entry name" value="Peptidase/esterase 'gauge' domain"/>
    <property type="match status" value="1"/>
</dbReference>
<dbReference type="PROSITE" id="PS00708">
    <property type="entry name" value="PRO_ENDOPEP_SER"/>
    <property type="match status" value="1"/>
</dbReference>
<comment type="function">
    <text evidence="5">Cleaves peptide bonds on the C-terminal side of prolyl residues within peptides that are up to approximately 30 amino acids long. Has high activity on the succinyl- (suc-) peptide-4-methylcoumaryl-7-amide (MCA) substrates suc-Gly-Pro-Leu-Gly-Pro-MCA, suc-Gly-Pro-MCA and suc-Ala-Ala-Ala-MCA.</text>
</comment>
<comment type="catalytic activity">
    <reaction evidence="5">
        <text>Hydrolysis of Pro-|-Xaa &gt;&gt; Ala-|-Xaa in oligopeptides.</text>
        <dbReference type="EC" id="3.4.21.26"/>
    </reaction>
</comment>
<comment type="activity regulation">
    <text evidence="5">Inhibited by DFP, Z-Pro-prolinal and poststatin, but not by PMSF, SBTI, EDTA, leupeptin, E-64 and pepstatin.</text>
</comment>
<comment type="subcellular location">
    <subcellularLocation>
        <location evidence="1">Cytoplasm</location>
    </subcellularLocation>
</comment>
<comment type="tissue specificity">
    <text evidence="5">Expressed in all tissues tested: uterus, kidney, heart, lung, small intestine, smooth muscle, liver, spleen, thymus, adrenal, pituitary and whole brain.</text>
</comment>
<comment type="developmental stage">
    <text evidence="5">In the estrous cycle, expression and activity are highest in the luteal phase.</text>
</comment>
<comment type="similarity">
    <text evidence="3">Belongs to the peptidase S9A family.</text>
</comment>
<proteinExistence type="evidence at protein level"/>
<gene>
    <name evidence="8" type="primary">Prep</name>
</gene>